<dbReference type="EMBL" id="Z36773">
    <property type="protein sequence ID" value="CAA85349.1"/>
    <property type="molecule type" value="Genomic_DNA"/>
</dbReference>
<dbReference type="PIR" id="S56134">
    <property type="entry name" value="S56134"/>
</dbReference>
<dbReference type="SMR" id="Q56353"/>
<dbReference type="InterPro" id="IPR029462">
    <property type="entry name" value="Rnk_N"/>
</dbReference>
<dbReference type="Pfam" id="PF14760">
    <property type="entry name" value="Rnk_N"/>
    <property type="match status" value="1"/>
</dbReference>
<organism>
    <name type="scientific">Paracoccus pantotrophus</name>
    <name type="common">Thiosphaera pantotropha</name>
    <dbReference type="NCBI Taxonomy" id="82367"/>
    <lineage>
        <taxon>Bacteria</taxon>
        <taxon>Pseudomonadati</taxon>
        <taxon>Pseudomonadota</taxon>
        <taxon>Alphaproteobacteria</taxon>
        <taxon>Rhodobacterales</taxon>
        <taxon>Paracoccaceae</taxon>
        <taxon>Paracoccus</taxon>
    </lineage>
</organism>
<reference key="1">
    <citation type="journal article" date="1995" name="Biochem. J.">
        <title>The napEDABC gene cluster encoding the periplasmic nitrate reductase system of Thiosphaera pantotropha.</title>
        <authorList>
            <person name="Berks B.C."/>
            <person name="Richardson D.J."/>
            <person name="Reilly A."/>
            <person name="Willis A.C."/>
            <person name="Ferguson S.J."/>
        </authorList>
    </citation>
    <scope>NUCLEOTIDE SEQUENCE [GENOMIC DNA]</scope>
    <source>
        <strain>ATCC 35512 / DSM 2944 / CIP 106514 / LMD 82.5 / NBRC 102493 / NCCB 82005 / GB17</strain>
    </source>
</reference>
<accession>Q56353</accession>
<name>YNAC_PARPN</name>
<evidence type="ECO:0000256" key="1">
    <source>
        <dbReference type="SAM" id="MobiDB-lite"/>
    </source>
</evidence>
<protein>
    <recommendedName>
        <fullName>Uncharacterized protein in napC 3'region</fullName>
    </recommendedName>
</protein>
<feature type="chain" id="PRO_0000066316" description="Uncharacterized protein in napC 3'region">
    <location>
        <begin position="1"/>
        <end position="97" status="greater than"/>
    </location>
</feature>
<feature type="region of interest" description="Disordered" evidence="1">
    <location>
        <begin position="1"/>
        <end position="20"/>
    </location>
</feature>
<feature type="region of interest" description="Disordered" evidence="1">
    <location>
        <begin position="52"/>
        <end position="97"/>
    </location>
</feature>
<feature type="non-terminal residue">
    <location>
        <position position="97"/>
    </location>
</feature>
<sequence>MTEGADMARTSRPPVTIASDTLDRLERLAEGAMARNPDLADRLLTELGPRPVPAARADARGCSPASERGHLSRTRPPGASRTVVLVLPEDADIGRRA</sequence>
<proteinExistence type="predicted"/>